<feature type="chain" id="PRO_0000354748" description="Catalase-peroxidase">
    <location>
        <begin position="1"/>
        <end position="728"/>
    </location>
</feature>
<feature type="active site" description="Proton acceptor" evidence="1">
    <location>
        <position position="92"/>
    </location>
</feature>
<feature type="binding site" description="axial binding residue" evidence="1">
    <location>
        <position position="259"/>
    </location>
    <ligand>
        <name>heme b</name>
        <dbReference type="ChEBI" id="CHEBI:60344"/>
    </ligand>
    <ligandPart>
        <name>Fe</name>
        <dbReference type="ChEBI" id="CHEBI:18248"/>
    </ligandPart>
</feature>
<feature type="site" description="Transition state stabilizer" evidence="1">
    <location>
        <position position="88"/>
    </location>
</feature>
<feature type="cross-link" description="Tryptophyl-tyrosyl-methioninium (Trp-Tyr) (with M-244)" evidence="1">
    <location>
        <begin position="91"/>
        <end position="218"/>
    </location>
</feature>
<feature type="cross-link" description="Tryptophyl-tyrosyl-methioninium (Tyr-Met) (with W-91)" evidence="1">
    <location>
        <begin position="218"/>
        <end position="244"/>
    </location>
</feature>
<feature type="helix" evidence="7">
    <location>
        <begin position="19"/>
        <end position="22"/>
    </location>
</feature>
<feature type="helix" evidence="7">
    <location>
        <begin position="29"/>
        <end position="32"/>
    </location>
</feature>
<feature type="strand" evidence="4">
    <location>
        <begin position="33"/>
        <end position="35"/>
    </location>
</feature>
<feature type="helix" evidence="7">
    <location>
        <begin position="37"/>
        <end position="39"/>
    </location>
</feature>
<feature type="helix" evidence="7">
    <location>
        <begin position="48"/>
        <end position="53"/>
    </location>
</feature>
<feature type="helix" evidence="7">
    <location>
        <begin position="57"/>
        <end position="68"/>
    </location>
</feature>
<feature type="helix" evidence="7">
    <location>
        <begin position="78"/>
        <end position="80"/>
    </location>
</feature>
<feature type="helix" evidence="7">
    <location>
        <begin position="83"/>
        <end position="90"/>
    </location>
</feature>
<feature type="helix" evidence="7">
    <location>
        <begin position="94"/>
        <end position="96"/>
    </location>
</feature>
<feature type="turn" evidence="7">
    <location>
        <begin position="99"/>
        <end position="101"/>
    </location>
</feature>
<feature type="strand" evidence="5">
    <location>
        <begin position="104"/>
        <end position="106"/>
    </location>
</feature>
<feature type="helix" evidence="7">
    <location>
        <begin position="110"/>
        <end position="112"/>
    </location>
</feature>
<feature type="helix" evidence="7">
    <location>
        <begin position="116"/>
        <end position="118"/>
    </location>
</feature>
<feature type="helix" evidence="7">
    <location>
        <begin position="120"/>
        <end position="122"/>
    </location>
</feature>
<feature type="helix" evidence="7">
    <location>
        <begin position="125"/>
        <end position="131"/>
    </location>
</feature>
<feature type="helix" evidence="7">
    <location>
        <begin position="133"/>
        <end position="139"/>
    </location>
</feature>
<feature type="helix" evidence="7">
    <location>
        <begin position="140"/>
        <end position="142"/>
    </location>
</feature>
<feature type="helix" evidence="7">
    <location>
        <begin position="145"/>
        <end position="159"/>
    </location>
</feature>
<feature type="strand" evidence="6">
    <location>
        <begin position="167"/>
        <end position="169"/>
    </location>
</feature>
<feature type="strand" evidence="3">
    <location>
        <begin position="192"/>
        <end position="194"/>
    </location>
</feature>
<feature type="strand" evidence="7">
    <location>
        <begin position="198"/>
        <end position="200"/>
    </location>
</feature>
<feature type="turn" evidence="7">
    <location>
        <begin position="201"/>
        <end position="203"/>
    </location>
</feature>
<feature type="strand" evidence="2">
    <location>
        <begin position="211"/>
        <end position="213"/>
    </location>
</feature>
<feature type="strand" evidence="7">
    <location>
        <begin position="217"/>
        <end position="219"/>
    </location>
</feature>
<feature type="helix" evidence="7">
    <location>
        <begin position="224"/>
        <end position="226"/>
    </location>
</feature>
<feature type="helix" evidence="7">
    <location>
        <begin position="230"/>
        <end position="242"/>
    </location>
</feature>
<feature type="turn" evidence="7">
    <location>
        <begin position="243"/>
        <end position="245"/>
    </location>
</feature>
<feature type="helix" evidence="7">
    <location>
        <begin position="248"/>
        <end position="258"/>
    </location>
</feature>
<feature type="strand" evidence="7">
    <location>
        <begin position="266"/>
        <end position="268"/>
    </location>
</feature>
<feature type="helix" evidence="7">
    <location>
        <begin position="270"/>
        <end position="272"/>
    </location>
</feature>
<feature type="helix" evidence="7">
    <location>
        <begin position="277"/>
        <end position="279"/>
    </location>
</feature>
<feature type="helix" evidence="7">
    <location>
        <begin position="282"/>
        <end position="284"/>
    </location>
</feature>
<feature type="helix" evidence="7">
    <location>
        <begin position="298"/>
        <end position="300"/>
    </location>
</feature>
<feature type="strand" evidence="7">
    <location>
        <begin position="302"/>
        <end position="305"/>
    </location>
</feature>
<feature type="helix" evidence="7">
    <location>
        <begin position="320"/>
        <end position="327"/>
    </location>
</feature>
<feature type="strand" evidence="7">
    <location>
        <begin position="330"/>
        <end position="334"/>
    </location>
</feature>
<feature type="strand" evidence="7">
    <location>
        <begin position="340"/>
        <end position="344"/>
    </location>
</feature>
<feature type="helix" evidence="7">
    <location>
        <begin position="367"/>
        <end position="374"/>
    </location>
</feature>
<feature type="helix" evidence="7">
    <location>
        <begin position="376"/>
        <end position="387"/>
    </location>
</feature>
<feature type="helix" evidence="7">
    <location>
        <begin position="389"/>
        <end position="405"/>
    </location>
</feature>
<feature type="helix" evidence="7">
    <location>
        <begin position="411"/>
        <end position="413"/>
    </location>
</feature>
<feature type="strand" evidence="6">
    <location>
        <begin position="415"/>
        <end position="418"/>
    </location>
</feature>
<feature type="helix" evidence="7">
    <location>
        <begin position="425"/>
        <end position="427"/>
    </location>
</feature>
<feature type="helix" evidence="7">
    <location>
        <begin position="440"/>
        <end position="452"/>
    </location>
</feature>
<feature type="helix" evidence="7">
    <location>
        <begin position="457"/>
        <end position="468"/>
    </location>
</feature>
<feature type="turn" evidence="7">
    <location>
        <begin position="473"/>
        <end position="476"/>
    </location>
</feature>
<feature type="helix" evidence="7">
    <location>
        <begin position="484"/>
        <end position="486"/>
    </location>
</feature>
<feature type="helix" evidence="7">
    <location>
        <begin position="490"/>
        <end position="492"/>
    </location>
</feature>
<feature type="helix" evidence="7">
    <location>
        <begin position="494"/>
        <end position="496"/>
    </location>
</feature>
<feature type="helix" evidence="7">
    <location>
        <begin position="498"/>
        <end position="517"/>
    </location>
</feature>
<feature type="helix" evidence="7">
    <location>
        <begin position="527"/>
        <end position="545"/>
    </location>
</feature>
<feature type="helix" evidence="8">
    <location>
        <begin position="563"/>
        <end position="565"/>
    </location>
</feature>
<feature type="helix" evidence="7">
    <location>
        <begin position="568"/>
        <end position="571"/>
    </location>
</feature>
<feature type="helix" evidence="7">
    <location>
        <begin position="572"/>
        <end position="574"/>
    </location>
</feature>
<feature type="strand" evidence="7">
    <location>
        <begin position="577"/>
        <end position="579"/>
    </location>
</feature>
<feature type="helix" evidence="7">
    <location>
        <begin position="580"/>
        <end position="582"/>
    </location>
</feature>
<feature type="strand" evidence="7">
    <location>
        <begin position="584"/>
        <end position="587"/>
    </location>
</feature>
<feature type="helix" evidence="7">
    <location>
        <begin position="593"/>
        <end position="603"/>
    </location>
</feature>
<feature type="helix" evidence="7">
    <location>
        <begin position="608"/>
        <end position="621"/>
    </location>
</feature>
<feature type="helix" evidence="7">
    <location>
        <begin position="625"/>
        <end position="627"/>
    </location>
</feature>
<feature type="helix" evidence="7">
    <location>
        <begin position="643"/>
        <end position="648"/>
    </location>
</feature>
<feature type="strand" evidence="7">
    <location>
        <begin position="653"/>
        <end position="657"/>
    </location>
</feature>
<feature type="strand" evidence="7">
    <location>
        <begin position="664"/>
        <end position="669"/>
    </location>
</feature>
<feature type="turn" evidence="7">
    <location>
        <begin position="670"/>
        <end position="672"/>
    </location>
</feature>
<feature type="strand" evidence="7">
    <location>
        <begin position="675"/>
        <end position="680"/>
    </location>
</feature>
<feature type="helix" evidence="7">
    <location>
        <begin position="681"/>
        <end position="684"/>
    </location>
</feature>
<feature type="helix" evidence="7">
    <location>
        <begin position="685"/>
        <end position="687"/>
    </location>
</feature>
<feature type="helix" evidence="7">
    <location>
        <begin position="690"/>
        <end position="699"/>
    </location>
</feature>
<feature type="helix" evidence="7">
    <location>
        <begin position="705"/>
        <end position="720"/>
    </location>
</feature>
<feature type="turn" evidence="7">
    <location>
        <begin position="721"/>
        <end position="723"/>
    </location>
</feature>
<feature type="turn" evidence="7">
    <location>
        <begin position="725"/>
        <end position="727"/>
    </location>
</feature>
<sequence>MSNEAKCPFHQAAGNGTSNRDWWPNQLDLSILHRHSSLSDPMGKDFNYAQAFEKLDLAAVKRDLHALMTTSQDWWPADFGHYGGLFIRMAWHSAGTYRTADGRGGAGEGQQRFAPLNSWPDNANLDKARRLLWPIKQKYGRAISWADLLILTGNVALESMGFKTFGFAGGRADTWEPEDVYWGSEKIWLELSGGPNSRYSGDRQLENPLAAVQMGLIYVNPEGPDGNPDPVAAARDIRDTFARMAMNDEETVALIAGGHTFGKTHGAGPASNVGAEPEAAGIEAQGLGWKSAYRTGKGADAITSGLEVTWTTTPTQWSHNFFENLFGYEWELTKSPAGAHQWVAKGADAVIPDAFDPSKKHRPTMLTTDLSLRFDPAYEKISRRFHENPEQFADAFARAWFKLTHRDMGPRARYLGPEVPAEVLLWQDPIPAVDHPLIDAADAAELKAKVLASGLTVSQLVSTAWAAASTFRGSDKRGGANGARIRLAPQKDWEANQPEQLAAVLETLEAIRTAFNGAQRGGKQVSLADLIVLAGCAGVEQAAKNAGHAVTVPFAPGRADASQEQTDVESMAVLEPVADGFRNYLKGKYRVPAEVLLVDKAQLLTLSAPEMTVLLGGLRVLGANVGQSRHGVFTAREQALTNDFFVNLLDMGTEWKPTAADADVFEGRDRATGELKWTGTRVDLVFGSHSQLRALAEVYGSADAQEKFVRDFVAVWNKVMNLDRFDLA</sequence>
<reference key="1">
    <citation type="journal article" date="2010" name="Genome Biol. Evol.">
        <title>Continuing evolution of Burkholderia mallei through genome reduction and large-scale rearrangements.</title>
        <authorList>
            <person name="Losada L."/>
            <person name="Ronning C.M."/>
            <person name="DeShazer D."/>
            <person name="Woods D."/>
            <person name="Fedorova N."/>
            <person name="Kim H.S."/>
            <person name="Shabalina S.A."/>
            <person name="Pearson T.R."/>
            <person name="Brinkac L."/>
            <person name="Tan P."/>
            <person name="Nandi T."/>
            <person name="Crabtree J."/>
            <person name="Badger J."/>
            <person name="Beckstrom-Sternberg S."/>
            <person name="Saqib M."/>
            <person name="Schutzer S.E."/>
            <person name="Keim P."/>
            <person name="Nierman W.C."/>
        </authorList>
    </citation>
    <scope>NUCLEOTIDE SEQUENCE [LARGE SCALE GENOMIC DNA]</scope>
    <source>
        <strain>1710b</strain>
    </source>
</reference>
<name>KATG_BURP1</name>
<keyword id="KW-0002">3D-structure</keyword>
<keyword id="KW-0349">Heme</keyword>
<keyword id="KW-0376">Hydrogen peroxide</keyword>
<keyword id="KW-0408">Iron</keyword>
<keyword id="KW-0479">Metal-binding</keyword>
<keyword id="KW-0560">Oxidoreductase</keyword>
<keyword id="KW-0575">Peroxidase</keyword>
<comment type="function">
    <text evidence="1">Bifunctional enzyme with both catalase and broad-spectrum peroxidase activity.</text>
</comment>
<comment type="catalytic activity">
    <reaction evidence="1">
        <text>H2O2 + AH2 = A + 2 H2O</text>
        <dbReference type="Rhea" id="RHEA:30275"/>
        <dbReference type="ChEBI" id="CHEBI:13193"/>
        <dbReference type="ChEBI" id="CHEBI:15377"/>
        <dbReference type="ChEBI" id="CHEBI:16240"/>
        <dbReference type="ChEBI" id="CHEBI:17499"/>
        <dbReference type="EC" id="1.11.1.21"/>
    </reaction>
</comment>
<comment type="catalytic activity">
    <reaction evidence="1">
        <text>2 H2O2 = O2 + 2 H2O</text>
        <dbReference type="Rhea" id="RHEA:20309"/>
        <dbReference type="ChEBI" id="CHEBI:15377"/>
        <dbReference type="ChEBI" id="CHEBI:15379"/>
        <dbReference type="ChEBI" id="CHEBI:16240"/>
        <dbReference type="EC" id="1.11.1.21"/>
    </reaction>
</comment>
<comment type="cofactor">
    <cofactor evidence="1">
        <name>heme b</name>
        <dbReference type="ChEBI" id="CHEBI:60344"/>
    </cofactor>
    <text evidence="1">Binds 1 heme b (iron(II)-protoporphyrin IX) group per dimer.</text>
</comment>
<comment type="subunit">
    <text evidence="1">Homodimer or homotetramer.</text>
</comment>
<comment type="PTM">
    <text evidence="1">Formation of the three residue Trp-Tyr-Met cross-link is important for the catalase, but not the peroxidase activity of the enzyme.</text>
</comment>
<comment type="similarity">
    <text evidence="1">Belongs to the peroxidase family. Peroxidase/catalase subfamily.</text>
</comment>
<gene>
    <name evidence="1" type="primary">katG</name>
    <name type="ordered locus">BURPS1710b_3366</name>
</gene>
<evidence type="ECO:0000255" key="1">
    <source>
        <dbReference type="HAMAP-Rule" id="MF_01961"/>
    </source>
</evidence>
<evidence type="ECO:0007829" key="2">
    <source>
        <dbReference type="PDB" id="5KQ6"/>
    </source>
</evidence>
<evidence type="ECO:0007829" key="3">
    <source>
        <dbReference type="PDB" id="5KQK"/>
    </source>
</evidence>
<evidence type="ECO:0007829" key="4">
    <source>
        <dbReference type="PDB" id="5KSK"/>
    </source>
</evidence>
<evidence type="ECO:0007829" key="5">
    <source>
        <dbReference type="PDB" id="5L02"/>
    </source>
</evidence>
<evidence type="ECO:0007829" key="6">
    <source>
        <dbReference type="PDB" id="5SXQ"/>
    </source>
</evidence>
<evidence type="ECO:0007829" key="7">
    <source>
        <dbReference type="PDB" id="5SXW"/>
    </source>
</evidence>
<evidence type="ECO:0007829" key="8">
    <source>
        <dbReference type="PDB" id="5SYH"/>
    </source>
</evidence>
<proteinExistence type="evidence at protein level"/>
<protein>
    <recommendedName>
        <fullName evidence="1">Catalase-peroxidase</fullName>
        <shortName evidence="1">CP</shortName>
        <ecNumber evidence="1">1.11.1.21</ecNumber>
    </recommendedName>
    <alternativeName>
        <fullName evidence="1">Peroxidase/catalase</fullName>
    </alternativeName>
</protein>
<organism>
    <name type="scientific">Burkholderia pseudomallei (strain 1710b)</name>
    <dbReference type="NCBI Taxonomy" id="320372"/>
    <lineage>
        <taxon>Bacteria</taxon>
        <taxon>Pseudomonadati</taxon>
        <taxon>Pseudomonadota</taxon>
        <taxon>Betaproteobacteria</taxon>
        <taxon>Burkholderiales</taxon>
        <taxon>Burkholderiaceae</taxon>
        <taxon>Burkholderia</taxon>
        <taxon>pseudomallei group</taxon>
    </lineage>
</organism>
<accession>Q3JNW6</accession>
<dbReference type="EC" id="1.11.1.21" evidence="1"/>
<dbReference type="EMBL" id="CP000124">
    <property type="protein sequence ID" value="ABA50840.1"/>
    <property type="molecule type" value="Genomic_DNA"/>
</dbReference>
<dbReference type="RefSeq" id="WP_004522123.1">
    <property type="nucleotide sequence ID" value="NC_007434.1"/>
</dbReference>
<dbReference type="PDB" id="5KQ0">
    <property type="method" value="X-ray"/>
    <property type="resolution" value="1.80 A"/>
    <property type="chains" value="A/B=1-728"/>
</dbReference>
<dbReference type="PDB" id="5KQ2">
    <property type="method" value="X-ray"/>
    <property type="resolution" value="1.90 A"/>
    <property type="chains" value="A/B=1-728"/>
</dbReference>
<dbReference type="PDB" id="5KQ3">
    <property type="method" value="X-ray"/>
    <property type="resolution" value="1.85 A"/>
    <property type="chains" value="A/B=1-728"/>
</dbReference>
<dbReference type="PDB" id="5KQ6">
    <property type="method" value="X-ray"/>
    <property type="resolution" value="1.62 A"/>
    <property type="chains" value="A/B=1-728"/>
</dbReference>
<dbReference type="PDB" id="5KQH">
    <property type="method" value="X-ray"/>
    <property type="resolution" value="1.82 A"/>
    <property type="chains" value="A/B=1-728"/>
</dbReference>
<dbReference type="PDB" id="5KQI">
    <property type="method" value="X-ray"/>
    <property type="resolution" value="1.87 A"/>
    <property type="chains" value="A/B=1-728"/>
</dbReference>
<dbReference type="PDB" id="5KQK">
    <property type="method" value="X-ray"/>
    <property type="resolution" value="1.75 A"/>
    <property type="chains" value="A/B=1-728"/>
</dbReference>
<dbReference type="PDB" id="5KQN">
    <property type="method" value="X-ray"/>
    <property type="resolution" value="1.75 A"/>
    <property type="chains" value="A/B=1-728"/>
</dbReference>
<dbReference type="PDB" id="5KQQ">
    <property type="method" value="X-ray"/>
    <property type="resolution" value="1.87 A"/>
    <property type="chains" value="A/B=1-728"/>
</dbReference>
<dbReference type="PDB" id="5KSF">
    <property type="method" value="X-ray"/>
    <property type="resolution" value="1.75 A"/>
    <property type="chains" value="A/B=1-728"/>
</dbReference>
<dbReference type="PDB" id="5KSG">
    <property type="method" value="X-ray"/>
    <property type="resolution" value="1.62 A"/>
    <property type="chains" value="A/B=1-728"/>
</dbReference>
<dbReference type="PDB" id="5KSK">
    <property type="method" value="X-ray"/>
    <property type="resolution" value="1.69 A"/>
    <property type="chains" value="A/B=1-728"/>
</dbReference>
<dbReference type="PDB" id="5KSN">
    <property type="method" value="X-ray"/>
    <property type="resolution" value="1.87 A"/>
    <property type="chains" value="A/B=1-728"/>
</dbReference>
<dbReference type="PDB" id="5KT8">
    <property type="method" value="X-ray"/>
    <property type="resolution" value="2.00 A"/>
    <property type="chains" value="A/B=1-728"/>
</dbReference>
<dbReference type="PDB" id="5KT9">
    <property type="method" value="X-ray"/>
    <property type="resolution" value="1.88 A"/>
    <property type="chains" value="A/B=1-728"/>
</dbReference>
<dbReference type="PDB" id="5L02">
    <property type="method" value="X-ray"/>
    <property type="resolution" value="1.90 A"/>
    <property type="chains" value="A/B=1-728"/>
</dbReference>
<dbReference type="PDB" id="5L05">
    <property type="method" value="X-ray"/>
    <property type="resolution" value="1.70 A"/>
    <property type="chains" value="A/B=1-728"/>
</dbReference>
<dbReference type="PDB" id="5SW4">
    <property type="method" value="X-ray"/>
    <property type="resolution" value="1.90 A"/>
    <property type="chains" value="A/B=1-728"/>
</dbReference>
<dbReference type="PDB" id="5SW5">
    <property type="method" value="X-ray"/>
    <property type="resolution" value="2.05 A"/>
    <property type="chains" value="A/B=1-728"/>
</dbReference>
<dbReference type="PDB" id="5SW6">
    <property type="method" value="X-ray"/>
    <property type="resolution" value="1.90 A"/>
    <property type="chains" value="A/B=1-728"/>
</dbReference>
<dbReference type="PDB" id="5SX0">
    <property type="method" value="X-ray"/>
    <property type="resolution" value="2.00 A"/>
    <property type="chains" value="A/B=1-728"/>
</dbReference>
<dbReference type="PDB" id="5SX1">
    <property type="method" value="X-ray"/>
    <property type="resolution" value="1.80 A"/>
    <property type="chains" value="A/B=1-728"/>
</dbReference>
<dbReference type="PDB" id="5SX2">
    <property type="method" value="X-ray"/>
    <property type="resolution" value="2.15 A"/>
    <property type="chains" value="A/B=1-728"/>
</dbReference>
<dbReference type="PDB" id="5SX3">
    <property type="method" value="X-ray"/>
    <property type="resolution" value="2.00 A"/>
    <property type="chains" value="A/B=1-728"/>
</dbReference>
<dbReference type="PDB" id="5SX6">
    <property type="method" value="X-ray"/>
    <property type="resolution" value="1.90 A"/>
    <property type="chains" value="A/B=1-728"/>
</dbReference>
<dbReference type="PDB" id="5SX7">
    <property type="method" value="X-ray"/>
    <property type="resolution" value="1.95 A"/>
    <property type="chains" value="A/B=1-728"/>
</dbReference>
<dbReference type="PDB" id="5SXQ">
    <property type="method" value="X-ray"/>
    <property type="resolution" value="2.10 A"/>
    <property type="chains" value="A/B=1-728"/>
</dbReference>
<dbReference type="PDB" id="5SXR">
    <property type="method" value="X-ray"/>
    <property type="resolution" value="1.69 A"/>
    <property type="chains" value="A/B=1-728"/>
</dbReference>
<dbReference type="PDB" id="5SXS">
    <property type="method" value="X-ray"/>
    <property type="resolution" value="1.89 A"/>
    <property type="chains" value="A/B=1-728"/>
</dbReference>
<dbReference type="PDB" id="5SXT">
    <property type="method" value="X-ray"/>
    <property type="resolution" value="1.90 A"/>
    <property type="chains" value="A/B=1-728"/>
</dbReference>
<dbReference type="PDB" id="5SXW">
    <property type="method" value="X-ray"/>
    <property type="resolution" value="1.60 A"/>
    <property type="chains" value="A/B=1-728"/>
</dbReference>
<dbReference type="PDB" id="5SXX">
    <property type="method" value="X-ray"/>
    <property type="resolution" value="1.70 A"/>
    <property type="chains" value="A/B=1-728"/>
</dbReference>
<dbReference type="PDB" id="5SYH">
    <property type="method" value="X-ray"/>
    <property type="resolution" value="1.65 A"/>
    <property type="chains" value="A/B=1-728"/>
</dbReference>
<dbReference type="PDB" id="5SYI">
    <property type="method" value="X-ray"/>
    <property type="resolution" value="1.70 A"/>
    <property type="chains" value="A/B=1-728"/>
</dbReference>
<dbReference type="PDB" id="5SYJ">
    <property type="method" value="X-ray"/>
    <property type="resolution" value="1.88 A"/>
    <property type="chains" value="A/B=1-728"/>
</dbReference>
<dbReference type="PDB" id="5SYK">
    <property type="method" value="X-ray"/>
    <property type="resolution" value="1.80 A"/>
    <property type="chains" value="A/B=1-728"/>
</dbReference>
<dbReference type="PDB" id="5SYL">
    <property type="method" value="X-ray"/>
    <property type="resolution" value="1.95 A"/>
    <property type="chains" value="A/B=1-728"/>
</dbReference>
<dbReference type="PDB" id="5SYU">
    <property type="method" value="X-ray"/>
    <property type="resolution" value="1.80 A"/>
    <property type="chains" value="A/B=1-728"/>
</dbReference>
<dbReference type="PDB" id="5SYV">
    <property type="method" value="X-ray"/>
    <property type="resolution" value="1.75 A"/>
    <property type="chains" value="A/B=1-728"/>
</dbReference>
<dbReference type="PDB" id="5SYW">
    <property type="method" value="X-ray"/>
    <property type="resolution" value="1.85 A"/>
    <property type="chains" value="A/B=1-728"/>
</dbReference>
<dbReference type="PDB" id="5SYY">
    <property type="method" value="X-ray"/>
    <property type="resolution" value="1.85 A"/>
    <property type="chains" value="A/B=1-728"/>
</dbReference>
<dbReference type="PDB" id="5TXQ">
    <property type="method" value="X-ray"/>
    <property type="resolution" value="1.90 A"/>
    <property type="chains" value="A/B=1-728"/>
</dbReference>
<dbReference type="PDB" id="5V4O">
    <property type="method" value="X-ray"/>
    <property type="resolution" value="1.95 A"/>
    <property type="chains" value="A/B=1-728"/>
</dbReference>
<dbReference type="PDB" id="5V53">
    <property type="method" value="X-ray"/>
    <property type="resolution" value="1.70 A"/>
    <property type="chains" value="A/B=1-728"/>
</dbReference>
<dbReference type="PDB" id="6B9B">
    <property type="method" value="X-ray"/>
    <property type="resolution" value="1.80 A"/>
    <property type="chains" value="A/B=1-728"/>
</dbReference>
<dbReference type="PDB" id="6CAW">
    <property type="method" value="X-ray"/>
    <property type="resolution" value="1.95 A"/>
    <property type="chains" value="A/B=1-728"/>
</dbReference>
<dbReference type="PDB" id="6CC6">
    <property type="method" value="X-ray"/>
    <property type="resolution" value="1.80 A"/>
    <property type="chains" value="A/B=1-728"/>
</dbReference>
<dbReference type="PDB" id="6CDQ">
    <property type="method" value="X-ray"/>
    <property type="resolution" value="1.92 A"/>
    <property type="chains" value="A/B=1-728"/>
</dbReference>
<dbReference type="PDB" id="6CEK">
    <property type="method" value="X-ray"/>
    <property type="resolution" value="1.80 A"/>
    <property type="chains" value="A/B=1-728"/>
</dbReference>
<dbReference type="PDBsum" id="5KQ0"/>
<dbReference type="PDBsum" id="5KQ2"/>
<dbReference type="PDBsum" id="5KQ3"/>
<dbReference type="PDBsum" id="5KQ6"/>
<dbReference type="PDBsum" id="5KQH"/>
<dbReference type="PDBsum" id="5KQI"/>
<dbReference type="PDBsum" id="5KQK"/>
<dbReference type="PDBsum" id="5KQN"/>
<dbReference type="PDBsum" id="5KQQ"/>
<dbReference type="PDBsum" id="5KSF"/>
<dbReference type="PDBsum" id="5KSG"/>
<dbReference type="PDBsum" id="5KSK"/>
<dbReference type="PDBsum" id="5KSN"/>
<dbReference type="PDBsum" id="5KT8"/>
<dbReference type="PDBsum" id="5KT9"/>
<dbReference type="PDBsum" id="5L02"/>
<dbReference type="PDBsum" id="5L05"/>
<dbReference type="PDBsum" id="5SW4"/>
<dbReference type="PDBsum" id="5SW5"/>
<dbReference type="PDBsum" id="5SW6"/>
<dbReference type="PDBsum" id="5SX0"/>
<dbReference type="PDBsum" id="5SX1"/>
<dbReference type="PDBsum" id="5SX2"/>
<dbReference type="PDBsum" id="5SX3"/>
<dbReference type="PDBsum" id="5SX6"/>
<dbReference type="PDBsum" id="5SX7"/>
<dbReference type="PDBsum" id="5SXQ"/>
<dbReference type="PDBsum" id="5SXR"/>
<dbReference type="PDBsum" id="5SXS"/>
<dbReference type="PDBsum" id="5SXT"/>
<dbReference type="PDBsum" id="5SXW"/>
<dbReference type="PDBsum" id="5SXX"/>
<dbReference type="PDBsum" id="5SYH"/>
<dbReference type="PDBsum" id="5SYI"/>
<dbReference type="PDBsum" id="5SYJ"/>
<dbReference type="PDBsum" id="5SYK"/>
<dbReference type="PDBsum" id="5SYL"/>
<dbReference type="PDBsum" id="5SYU"/>
<dbReference type="PDBsum" id="5SYV"/>
<dbReference type="PDBsum" id="5SYW"/>
<dbReference type="PDBsum" id="5SYY"/>
<dbReference type="PDBsum" id="5TXQ"/>
<dbReference type="PDBsum" id="5V4O"/>
<dbReference type="PDBsum" id="5V53"/>
<dbReference type="PDBsum" id="6B9B"/>
<dbReference type="PDBsum" id="6CAW"/>
<dbReference type="PDBsum" id="6CC6"/>
<dbReference type="PDBsum" id="6CDQ"/>
<dbReference type="PDBsum" id="6CEK"/>
<dbReference type="SMR" id="Q3JNW6"/>
<dbReference type="PeroxiBase" id="3313">
    <property type="entry name" value="BpCP01_1710b"/>
</dbReference>
<dbReference type="EnsemblBacteria" id="ABA50840">
    <property type="protein sequence ID" value="ABA50840"/>
    <property type="gene ID" value="BURPS1710b_3366"/>
</dbReference>
<dbReference type="KEGG" id="bpm:BURPS1710b_3366"/>
<dbReference type="HOGENOM" id="CLU_025424_2_0_4"/>
<dbReference type="BRENDA" id="1.11.1.21">
    <property type="organism ID" value="1031"/>
</dbReference>
<dbReference type="Proteomes" id="UP000002700">
    <property type="component" value="Chromosome I"/>
</dbReference>
<dbReference type="GO" id="GO:0005829">
    <property type="term" value="C:cytosol"/>
    <property type="evidence" value="ECO:0007669"/>
    <property type="project" value="TreeGrafter"/>
</dbReference>
<dbReference type="GO" id="GO:0004096">
    <property type="term" value="F:catalase activity"/>
    <property type="evidence" value="ECO:0007669"/>
    <property type="project" value="UniProtKB-UniRule"/>
</dbReference>
<dbReference type="GO" id="GO:0020037">
    <property type="term" value="F:heme binding"/>
    <property type="evidence" value="ECO:0007669"/>
    <property type="project" value="InterPro"/>
</dbReference>
<dbReference type="GO" id="GO:0046872">
    <property type="term" value="F:metal ion binding"/>
    <property type="evidence" value="ECO:0007669"/>
    <property type="project" value="UniProtKB-KW"/>
</dbReference>
<dbReference type="GO" id="GO:0070301">
    <property type="term" value="P:cellular response to hydrogen peroxide"/>
    <property type="evidence" value="ECO:0007669"/>
    <property type="project" value="TreeGrafter"/>
</dbReference>
<dbReference type="GO" id="GO:0042744">
    <property type="term" value="P:hydrogen peroxide catabolic process"/>
    <property type="evidence" value="ECO:0007669"/>
    <property type="project" value="UniProtKB-KW"/>
</dbReference>
<dbReference type="CDD" id="cd00649">
    <property type="entry name" value="catalase_peroxidase_1"/>
    <property type="match status" value="1"/>
</dbReference>
<dbReference type="CDD" id="cd08200">
    <property type="entry name" value="catalase_peroxidase_2"/>
    <property type="match status" value="1"/>
</dbReference>
<dbReference type="FunFam" id="1.10.420.10:FF:000002">
    <property type="entry name" value="Catalase-peroxidase"/>
    <property type="match status" value="1"/>
</dbReference>
<dbReference type="FunFam" id="1.10.420.10:FF:000004">
    <property type="entry name" value="Catalase-peroxidase"/>
    <property type="match status" value="1"/>
</dbReference>
<dbReference type="FunFam" id="1.10.520.10:FF:000002">
    <property type="entry name" value="Catalase-peroxidase"/>
    <property type="match status" value="1"/>
</dbReference>
<dbReference type="FunFam" id="1.10.520.10:FF:000004">
    <property type="entry name" value="Catalase-peroxidase"/>
    <property type="match status" value="1"/>
</dbReference>
<dbReference type="Gene3D" id="1.10.520.10">
    <property type="match status" value="2"/>
</dbReference>
<dbReference type="Gene3D" id="1.10.420.10">
    <property type="entry name" value="Peroxidase, domain 2"/>
    <property type="match status" value="2"/>
</dbReference>
<dbReference type="HAMAP" id="MF_01961">
    <property type="entry name" value="Catal_peroxid"/>
    <property type="match status" value="1"/>
</dbReference>
<dbReference type="InterPro" id="IPR000763">
    <property type="entry name" value="Catalase_peroxidase"/>
</dbReference>
<dbReference type="InterPro" id="IPR002016">
    <property type="entry name" value="Haem_peroxidase"/>
</dbReference>
<dbReference type="InterPro" id="IPR010255">
    <property type="entry name" value="Haem_peroxidase_sf"/>
</dbReference>
<dbReference type="InterPro" id="IPR019794">
    <property type="entry name" value="Peroxidases_AS"/>
</dbReference>
<dbReference type="InterPro" id="IPR019793">
    <property type="entry name" value="Peroxidases_heam-ligand_BS"/>
</dbReference>
<dbReference type="NCBIfam" id="TIGR00198">
    <property type="entry name" value="cat_per_HPI"/>
    <property type="match status" value="1"/>
</dbReference>
<dbReference type="NCBIfam" id="NF011635">
    <property type="entry name" value="PRK15061.1"/>
    <property type="match status" value="1"/>
</dbReference>
<dbReference type="PANTHER" id="PTHR30555:SF0">
    <property type="entry name" value="CATALASE-PEROXIDASE"/>
    <property type="match status" value="1"/>
</dbReference>
<dbReference type="PANTHER" id="PTHR30555">
    <property type="entry name" value="HYDROPEROXIDASE I, BIFUNCTIONAL CATALASE-PEROXIDASE"/>
    <property type="match status" value="1"/>
</dbReference>
<dbReference type="Pfam" id="PF00141">
    <property type="entry name" value="peroxidase"/>
    <property type="match status" value="2"/>
</dbReference>
<dbReference type="PRINTS" id="PR00460">
    <property type="entry name" value="BPEROXIDASE"/>
</dbReference>
<dbReference type="PRINTS" id="PR00458">
    <property type="entry name" value="PEROXIDASE"/>
</dbReference>
<dbReference type="SUPFAM" id="SSF48113">
    <property type="entry name" value="Heme-dependent peroxidases"/>
    <property type="match status" value="2"/>
</dbReference>
<dbReference type="PROSITE" id="PS00435">
    <property type="entry name" value="PEROXIDASE_1"/>
    <property type="match status" value="1"/>
</dbReference>
<dbReference type="PROSITE" id="PS00436">
    <property type="entry name" value="PEROXIDASE_2"/>
    <property type="match status" value="1"/>
</dbReference>
<dbReference type="PROSITE" id="PS50873">
    <property type="entry name" value="PEROXIDASE_4"/>
    <property type="match status" value="1"/>
</dbReference>